<organism>
    <name type="scientific">Escherichia coli (strain SE11)</name>
    <dbReference type="NCBI Taxonomy" id="409438"/>
    <lineage>
        <taxon>Bacteria</taxon>
        <taxon>Pseudomonadati</taxon>
        <taxon>Pseudomonadota</taxon>
        <taxon>Gammaproteobacteria</taxon>
        <taxon>Enterobacterales</taxon>
        <taxon>Enterobacteriaceae</taxon>
        <taxon>Escherichia</taxon>
    </lineage>
</organism>
<reference key="1">
    <citation type="journal article" date="2008" name="DNA Res.">
        <title>Complete genome sequence and comparative analysis of the wild-type commensal Escherichia coli strain SE11 isolated from a healthy adult.</title>
        <authorList>
            <person name="Oshima K."/>
            <person name="Toh H."/>
            <person name="Ogura Y."/>
            <person name="Sasamoto H."/>
            <person name="Morita H."/>
            <person name="Park S.-H."/>
            <person name="Ooka T."/>
            <person name="Iyoda S."/>
            <person name="Taylor T.D."/>
            <person name="Hayashi T."/>
            <person name="Itoh K."/>
            <person name="Hattori M."/>
        </authorList>
    </citation>
    <scope>NUCLEOTIDE SEQUENCE [LARGE SCALE GENOMIC DNA]</scope>
    <source>
        <strain>SE11</strain>
    </source>
</reference>
<name>RDGC_ECOSE</name>
<comment type="function">
    <text evidence="1">May be involved in recombination.</text>
</comment>
<comment type="subcellular location">
    <subcellularLocation>
        <location evidence="1">Cytoplasm</location>
        <location evidence="1">Nucleoid</location>
    </subcellularLocation>
</comment>
<comment type="similarity">
    <text evidence="1">Belongs to the RdgC family.</text>
</comment>
<protein>
    <recommendedName>
        <fullName evidence="1">Recombination-associated protein RdgC</fullName>
    </recommendedName>
</protein>
<keyword id="KW-0963">Cytoplasm</keyword>
<keyword id="KW-0233">DNA recombination</keyword>
<proteinExistence type="inferred from homology"/>
<gene>
    <name evidence="1" type="primary">rdgC</name>
    <name type="ordered locus">ECSE_0414</name>
</gene>
<dbReference type="EMBL" id="AP009240">
    <property type="protein sequence ID" value="BAG75938.1"/>
    <property type="molecule type" value="Genomic_DNA"/>
</dbReference>
<dbReference type="RefSeq" id="WP_001298537.1">
    <property type="nucleotide sequence ID" value="NC_011415.1"/>
</dbReference>
<dbReference type="SMR" id="B6HZJ3"/>
<dbReference type="GeneID" id="75202816"/>
<dbReference type="KEGG" id="ecy:ECSE_0414"/>
<dbReference type="HOGENOM" id="CLU_052038_1_1_6"/>
<dbReference type="Proteomes" id="UP000008199">
    <property type="component" value="Chromosome"/>
</dbReference>
<dbReference type="GO" id="GO:0043590">
    <property type="term" value="C:bacterial nucleoid"/>
    <property type="evidence" value="ECO:0007669"/>
    <property type="project" value="TreeGrafter"/>
</dbReference>
<dbReference type="GO" id="GO:0005737">
    <property type="term" value="C:cytoplasm"/>
    <property type="evidence" value="ECO:0007669"/>
    <property type="project" value="UniProtKB-UniRule"/>
</dbReference>
<dbReference type="GO" id="GO:0003690">
    <property type="term" value="F:double-stranded DNA binding"/>
    <property type="evidence" value="ECO:0007669"/>
    <property type="project" value="TreeGrafter"/>
</dbReference>
<dbReference type="GO" id="GO:0006310">
    <property type="term" value="P:DNA recombination"/>
    <property type="evidence" value="ECO:0007669"/>
    <property type="project" value="UniProtKB-UniRule"/>
</dbReference>
<dbReference type="GO" id="GO:0000018">
    <property type="term" value="P:regulation of DNA recombination"/>
    <property type="evidence" value="ECO:0007669"/>
    <property type="project" value="TreeGrafter"/>
</dbReference>
<dbReference type="HAMAP" id="MF_00194">
    <property type="entry name" value="RdgC"/>
    <property type="match status" value="1"/>
</dbReference>
<dbReference type="InterPro" id="IPR007476">
    <property type="entry name" value="RdgC"/>
</dbReference>
<dbReference type="NCBIfam" id="NF001460">
    <property type="entry name" value="PRK00321.1-1"/>
    <property type="match status" value="1"/>
</dbReference>
<dbReference type="NCBIfam" id="NF001462">
    <property type="entry name" value="PRK00321.1-3"/>
    <property type="match status" value="1"/>
</dbReference>
<dbReference type="NCBIfam" id="NF001464">
    <property type="entry name" value="PRK00321.1-5"/>
    <property type="match status" value="1"/>
</dbReference>
<dbReference type="PANTHER" id="PTHR38103">
    <property type="entry name" value="RECOMBINATION-ASSOCIATED PROTEIN RDGC"/>
    <property type="match status" value="1"/>
</dbReference>
<dbReference type="PANTHER" id="PTHR38103:SF1">
    <property type="entry name" value="RECOMBINATION-ASSOCIATED PROTEIN RDGC"/>
    <property type="match status" value="1"/>
</dbReference>
<dbReference type="Pfam" id="PF04381">
    <property type="entry name" value="RdgC"/>
    <property type="match status" value="1"/>
</dbReference>
<sequence>MLWFKNLMVYRLSREISLRAEEMEKQLASMAFTPCGSQDMAKMGWVPPMGSHSDALTHVANGQIVICARKEEKILPSPVIKQALEAKIAKLEAEQARKLKKTEKDSLKDEVLHSLLPRAFSRFSQTMMWIDTVNGLIMVDCASAKKAEDTLALLRKSLGSLPVVPLSMENPIELTLTEWVRSGSAAQGFQLLDEAELKSLLEDGGVIRAKKQDLTSEEITNHIEAGKVVTKLALDWQQRIQFVMCDDGSLKRLKFCDELRDQNEDIDREDFAQRFDADFILMTGELAALIQNLIEGLGGEAQR</sequence>
<accession>B6HZJ3</accession>
<evidence type="ECO:0000255" key="1">
    <source>
        <dbReference type="HAMAP-Rule" id="MF_00194"/>
    </source>
</evidence>
<feature type="chain" id="PRO_1000099062" description="Recombination-associated protein RdgC">
    <location>
        <begin position="1"/>
        <end position="303"/>
    </location>
</feature>